<accession>P53151</accession>
<accession>A0A1S0T075</accession>
<evidence type="ECO:0000255" key="1"/>
<evidence type="ECO:0000305" key="2"/>
<name>YGI8_YEAST</name>
<sequence>MHEVTRTYYFFLFFFLSYKRQINAAFIALFDFPLLFIYFPFLILVLFYNSNANLTAIRNTYSISSRLNPSGAFLTHEECGLVLQYIYYWLGLENKFIDLGCNSLSVVCFLADLRVYLRVPG</sequence>
<dbReference type="EMBL" id="Z72610">
    <property type="protein sequence ID" value="CAA96794.1"/>
    <property type="molecule type" value="Genomic_DNA"/>
</dbReference>
<dbReference type="EMBL" id="Z72609">
    <property type="protein sequence ID" value="CAA96793.1"/>
    <property type="molecule type" value="Genomic_DNA"/>
</dbReference>
<dbReference type="EMBL" id="BK006941">
    <property type="protein sequence ID" value="DAA80297.1"/>
    <property type="molecule type" value="Genomic_DNA"/>
</dbReference>
<dbReference type="PIR" id="S64095">
    <property type="entry name" value="S64095"/>
</dbReference>
<dbReference type="RefSeq" id="NP_001335777.1">
    <property type="nucleotide sequence ID" value="NM_001348836.1"/>
</dbReference>
<dbReference type="FunCoup" id="P53151">
    <property type="interactions" value="28"/>
</dbReference>
<dbReference type="IntAct" id="P53151">
    <property type="interactions" value="1"/>
</dbReference>
<dbReference type="PaxDb" id="4932-YGL088W"/>
<dbReference type="EnsemblFungi" id="YGL088W_mRNA">
    <property type="protein sequence ID" value="YGL088W"/>
    <property type="gene ID" value="YGL088W"/>
</dbReference>
<dbReference type="GeneID" id="852792"/>
<dbReference type="AGR" id="SGD:S000003056"/>
<dbReference type="SGD" id="S000003056">
    <property type="gene designation" value="YGL088W"/>
</dbReference>
<dbReference type="HOGENOM" id="CLU_2039892_0_0_1"/>
<dbReference type="InParanoid" id="P53151"/>
<dbReference type="PRO" id="PR:P53151"/>
<dbReference type="Proteomes" id="UP000002311">
    <property type="component" value="Chromosome VII"/>
</dbReference>
<dbReference type="RNAct" id="P53151">
    <property type="molecule type" value="protein"/>
</dbReference>
<dbReference type="GO" id="GO:0016020">
    <property type="term" value="C:membrane"/>
    <property type="evidence" value="ECO:0007669"/>
    <property type="project" value="UniProtKB-SubCell"/>
</dbReference>
<comment type="subcellular location">
    <subcellularLocation>
        <location evidence="2">Membrane</location>
        <topology evidence="2">Multi-pass membrane protein</topology>
    </subcellularLocation>
</comment>
<feature type="chain" id="PRO_0000202756" description="Uncharacterized protein YGL088W">
    <location>
        <begin position="1"/>
        <end position="121"/>
    </location>
</feature>
<feature type="transmembrane region" description="Helical" evidence="1">
    <location>
        <begin position="26"/>
        <end position="46"/>
    </location>
</feature>
<feature type="transmembrane region" description="Helical" evidence="1">
    <location>
        <begin position="72"/>
        <end position="92"/>
    </location>
</feature>
<proteinExistence type="predicted"/>
<reference key="1">
    <citation type="journal article" date="1997" name="Yeast">
        <title>Sequence analysis of 203 kilobases from Saccharomyces cerevisiae chromosome VII.</title>
        <authorList>
            <person name="Rieger M."/>
            <person name="Brueckner M."/>
            <person name="Schaefer M."/>
            <person name="Mueller-Auer S."/>
        </authorList>
    </citation>
    <scope>NUCLEOTIDE SEQUENCE [GENOMIC DNA]</scope>
    <source>
        <strain>ATCC 204508 / S288c</strain>
    </source>
</reference>
<reference key="2">
    <citation type="journal article" date="1997" name="Nature">
        <title>The nucleotide sequence of Saccharomyces cerevisiae chromosome VII.</title>
        <authorList>
            <person name="Tettelin H."/>
            <person name="Agostoni-Carbone M.L."/>
            <person name="Albermann K."/>
            <person name="Albers M."/>
            <person name="Arroyo J."/>
            <person name="Backes U."/>
            <person name="Barreiros T."/>
            <person name="Bertani I."/>
            <person name="Bjourson A.J."/>
            <person name="Brueckner M."/>
            <person name="Bruschi C.V."/>
            <person name="Carignani G."/>
            <person name="Castagnoli L."/>
            <person name="Cerdan E."/>
            <person name="Clemente M.L."/>
            <person name="Coblenz A."/>
            <person name="Coglievina M."/>
            <person name="Coissac E."/>
            <person name="Defoor E."/>
            <person name="Del Bino S."/>
            <person name="Delius H."/>
            <person name="Delneri D."/>
            <person name="de Wergifosse P."/>
            <person name="Dujon B."/>
            <person name="Durand P."/>
            <person name="Entian K.-D."/>
            <person name="Eraso P."/>
            <person name="Escribano V."/>
            <person name="Fabiani L."/>
            <person name="Fartmann B."/>
            <person name="Feroli F."/>
            <person name="Feuermann M."/>
            <person name="Frontali L."/>
            <person name="Garcia-Gonzalez M."/>
            <person name="Garcia-Saez M.I."/>
            <person name="Goffeau A."/>
            <person name="Guerreiro P."/>
            <person name="Hani J."/>
            <person name="Hansen M."/>
            <person name="Hebling U."/>
            <person name="Hernandez K."/>
            <person name="Heumann K."/>
            <person name="Hilger F."/>
            <person name="Hofmann B."/>
            <person name="Indge K.J."/>
            <person name="James C.M."/>
            <person name="Klima R."/>
            <person name="Koetter P."/>
            <person name="Kramer B."/>
            <person name="Kramer W."/>
            <person name="Lauquin G."/>
            <person name="Leuther H."/>
            <person name="Louis E.J."/>
            <person name="Maillier E."/>
            <person name="Marconi A."/>
            <person name="Martegani E."/>
            <person name="Mazon M.J."/>
            <person name="Mazzoni C."/>
            <person name="McReynolds A.D.K."/>
            <person name="Melchioretto P."/>
            <person name="Mewes H.-W."/>
            <person name="Minenkova O."/>
            <person name="Mueller-Auer S."/>
            <person name="Nawrocki A."/>
            <person name="Netter P."/>
            <person name="Neu R."/>
            <person name="Nombela C."/>
            <person name="Oliver S.G."/>
            <person name="Panzeri L."/>
            <person name="Paoluzi S."/>
            <person name="Plevani P."/>
            <person name="Portetelle D."/>
            <person name="Portillo F."/>
            <person name="Potier S."/>
            <person name="Purnelle B."/>
            <person name="Rieger M."/>
            <person name="Riles L."/>
            <person name="Rinaldi T."/>
            <person name="Robben J."/>
            <person name="Rodrigues-Pousada C."/>
            <person name="Rodriguez-Belmonte E."/>
            <person name="Rodriguez-Torres A.M."/>
            <person name="Rose M."/>
            <person name="Ruzzi M."/>
            <person name="Saliola M."/>
            <person name="Sanchez-Perez M."/>
            <person name="Schaefer B."/>
            <person name="Schaefer M."/>
            <person name="Scharfe M."/>
            <person name="Schmidheini T."/>
            <person name="Schreer A."/>
            <person name="Skala J."/>
            <person name="Souciet J.-L."/>
            <person name="Steensma H.Y."/>
            <person name="Talla E."/>
            <person name="Thierry A."/>
            <person name="Vandenbol M."/>
            <person name="van der Aart Q.J.M."/>
            <person name="Van Dyck L."/>
            <person name="Vanoni M."/>
            <person name="Verhasselt P."/>
            <person name="Voet M."/>
            <person name="Volckaert G."/>
            <person name="Wambutt R."/>
            <person name="Watson M.D."/>
            <person name="Weber N."/>
            <person name="Wedler E."/>
            <person name="Wedler H."/>
            <person name="Wipfli P."/>
            <person name="Wolf K."/>
            <person name="Wright L.F."/>
            <person name="Zaccaria P."/>
            <person name="Zimmermann M."/>
            <person name="Zollner A."/>
            <person name="Kleine K."/>
        </authorList>
    </citation>
    <scope>NUCLEOTIDE SEQUENCE [LARGE SCALE GENOMIC DNA]</scope>
    <source>
        <strain>ATCC 204508 / S288c</strain>
    </source>
</reference>
<reference key="3">
    <citation type="journal article" date="2014" name="G3 (Bethesda)">
        <title>The reference genome sequence of Saccharomyces cerevisiae: Then and now.</title>
        <authorList>
            <person name="Engel S.R."/>
            <person name="Dietrich F.S."/>
            <person name="Fisk D.G."/>
            <person name="Binkley G."/>
            <person name="Balakrishnan R."/>
            <person name="Costanzo M.C."/>
            <person name="Dwight S.S."/>
            <person name="Hitz B.C."/>
            <person name="Karra K."/>
            <person name="Nash R.S."/>
            <person name="Weng S."/>
            <person name="Wong E.D."/>
            <person name="Lloyd P."/>
            <person name="Skrzypek M.S."/>
            <person name="Miyasato S.R."/>
            <person name="Simison M."/>
            <person name="Cherry J.M."/>
        </authorList>
    </citation>
    <scope>GENOME REANNOTATION</scope>
    <source>
        <strain>ATCC 204508 / S288c</strain>
    </source>
</reference>
<organism>
    <name type="scientific">Saccharomyces cerevisiae (strain ATCC 204508 / S288c)</name>
    <name type="common">Baker's yeast</name>
    <dbReference type="NCBI Taxonomy" id="559292"/>
    <lineage>
        <taxon>Eukaryota</taxon>
        <taxon>Fungi</taxon>
        <taxon>Dikarya</taxon>
        <taxon>Ascomycota</taxon>
        <taxon>Saccharomycotina</taxon>
        <taxon>Saccharomycetes</taxon>
        <taxon>Saccharomycetales</taxon>
        <taxon>Saccharomycetaceae</taxon>
        <taxon>Saccharomyces</taxon>
    </lineage>
</organism>
<keyword id="KW-0472">Membrane</keyword>
<keyword id="KW-1185">Reference proteome</keyword>
<keyword id="KW-0812">Transmembrane</keyword>
<keyword id="KW-1133">Transmembrane helix</keyword>
<protein>
    <recommendedName>
        <fullName>Uncharacterized protein YGL088W</fullName>
    </recommendedName>
</protein>
<gene>
    <name type="ordered locus">YGL088W</name>
</gene>